<feature type="chain" id="PRO_0000376888" description="Probable polyketide synthase 15">
    <location>
        <begin position="1"/>
        <end position="3174"/>
    </location>
</feature>
<feature type="domain" description="Ketosynthase family 3 (KS3)" evidence="4">
    <location>
        <begin position="23"/>
        <end position="474"/>
    </location>
</feature>
<feature type="domain" description="PKS/mFAS DH" evidence="5">
    <location>
        <begin position="1034"/>
        <end position="1332"/>
    </location>
</feature>
<feature type="domain" description="Carrier" evidence="3">
    <location>
        <begin position="2653"/>
        <end position="2730"/>
    </location>
</feature>
<feature type="region of interest" description="Disordered" evidence="6">
    <location>
        <begin position="578"/>
        <end position="601"/>
    </location>
</feature>
<feature type="region of interest" description="Acyl/malonyl transferase">
    <location>
        <begin position="707"/>
        <end position="740"/>
    </location>
</feature>
<feature type="region of interest" description="N-terminal hotdog fold" evidence="5">
    <location>
        <begin position="1034"/>
        <end position="1156"/>
    </location>
</feature>
<feature type="region of interest" description="C-terminal hotdog fold" evidence="5">
    <location>
        <begin position="1182"/>
        <end position="1332"/>
    </location>
</feature>
<feature type="coiled-coil region" evidence="2">
    <location>
        <begin position="472"/>
        <end position="509"/>
    </location>
</feature>
<feature type="coiled-coil region" evidence="2">
    <location>
        <begin position="574"/>
        <end position="604"/>
    </location>
</feature>
<feature type="coiled-coil region" evidence="2">
    <location>
        <begin position="1758"/>
        <end position="1793"/>
    </location>
</feature>
<feature type="compositionally biased region" description="Basic and acidic residues" evidence="6">
    <location>
        <begin position="578"/>
        <end position="599"/>
    </location>
</feature>
<feature type="active site" description="For beta-ketoacyl synthase activity" evidence="4">
    <location>
        <position position="194"/>
    </location>
</feature>
<feature type="active site" description="For beta-ketoacyl synthase activity" evidence="4">
    <location>
        <position position="342"/>
    </location>
</feature>
<feature type="active site" description="For beta-ketoacyl synthase activity" evidence="4">
    <location>
        <position position="397"/>
    </location>
</feature>
<feature type="active site" description="For acyl/malonyl transferase activity" evidence="1">
    <location>
        <position position="717"/>
    </location>
</feature>
<feature type="active site" description="Proton acceptor; for dehydratase activity" evidence="5">
    <location>
        <position position="1068"/>
    </location>
</feature>
<feature type="active site" description="Proton donor; for dehydratase activity" evidence="5">
    <location>
        <position position="1241"/>
    </location>
</feature>
<feature type="modified residue" description="O-(pantetheine 4'-phosphoryl)serine" evidence="3">
    <location>
        <position position="2690"/>
    </location>
</feature>
<gene>
    <name type="primary">pks15</name>
    <name type="ORF">DDB_G0273007</name>
</gene>
<proteinExistence type="inferred from homology"/>
<accession>Q558W4</accession>
<accession>Q86B12</accession>
<comment type="function">
    <text evidence="1">Probable polyketide synthase.</text>
</comment>
<comment type="cofactor">
    <cofactor evidence="1">
        <name>pantetheine 4'-phosphate</name>
        <dbReference type="ChEBI" id="CHEBI:47942"/>
    </cofactor>
    <text evidence="1">Binds 1 phosphopantetheine covalently.</text>
</comment>
<comment type="domain">
    <text evidence="1">Modular protein that is responsible for the completion of one condensation-processing cycle. The beta-ketoacyl synthase region is responsible for the actual condensation reaction while the acyl/malonyl transferase region is responsible for incorporating carboxylic acids units onto an acyl carrier protein (ACP) domain (By similarity).</text>
</comment>
<comment type="miscellaneous">
    <text>Encoded by one of the numerous copies of polyketide synthase genes.</text>
</comment>
<evidence type="ECO:0000250" key="1"/>
<evidence type="ECO:0000255" key="2"/>
<evidence type="ECO:0000255" key="3">
    <source>
        <dbReference type="PROSITE-ProRule" id="PRU00258"/>
    </source>
</evidence>
<evidence type="ECO:0000255" key="4">
    <source>
        <dbReference type="PROSITE-ProRule" id="PRU01348"/>
    </source>
</evidence>
<evidence type="ECO:0000255" key="5">
    <source>
        <dbReference type="PROSITE-ProRule" id="PRU01363"/>
    </source>
</evidence>
<evidence type="ECO:0000256" key="6">
    <source>
        <dbReference type="SAM" id="MobiDB-lite"/>
    </source>
</evidence>
<sequence length="3174" mass="361566">MNNNNNNNNNNNNNNTNNIIDDNDEIAIVGIGFRLPSGDISKSNDSPIELWDNLMNGFDGIIESRERWSDNFNELGEISNGNAGLLPLDEWKSFDPLFFGINPSEAPSIDPQQRLLLKCTWEALEDARIDPMKIRGSNTSVFIGCSTNDYQNQQQNQMNNNKSNIFGLTNHSISNRISYCFDFRNESITIDTACSSSLNAIKMGYQSIKFSKQNNCNLSIVGGVNLLLDTNVSKSFTHLNMLSKSTNGTARCMTFDESADGYVRGEGVGIVVLKSLKQALSDGNTIYCIINGASSNVDGGGLKDKQNFFSPSSISQCENIKMAIQSTNGKIKFNNIDYIEAHGTGTPTGDPIELEAISNSFKQLNDIAIGSGSCSGSNNNTTQQPLLIGSIKSSIGHLEAASGVASLIKCCLMFKNGYFVPNINFNKPNPMIKFNEWNLKVVTEPIQFNTNKQITMLINSFGITGSNCCLILSQFKNNENQQQQQQQQQQQQQQQQQQQQQRGQQQYDNSQPKKYLIPFSANSTLSLKKYQSIIESEEFQLKINFNEFVKNQIFNKSLSLYQRLVIFSVSNWDEFNKQKQSQKEKEKEKEREGEEKEQLNRVQTLNSKSSTMSMVHSKNPIVVFVFAGQGSQYSRMAMELYNSEPIFKQSINMFDNKLFKYYGYSVFEKFISITDHDDDISIQHPTIAQPIMCMLAISLFEFYKHWGIEASFIVGHSLGEIPAAYCSGMITLDTLCYLIYHRSLAQIQTHCNGGRMLSVNISSEDYLSSNYSTKYPDIEIACYNSPNSIVLGGKEQQLNQISNELKDKGIFSKMLASLSSFHTSNQKIVKDDISKLNIDYELPKIPIFSTVTTNLYYNNFNDSNNNSNNNNNNVETTTTPFNSEYIYNNIVEPVKFSQTISNLYKHIEINKLGTDIVFIELAPHPTLQFYLKQMIPVSTNYFSGKISIYSPLHKKKNDTMEIQKTIAKLYCENRYNINFKSQFDCGSINNHNHTVIPPLQQPQPQPLPNYQWDDEKYWKEDLIQQKHRIEGPPIDILGLSNYDNSSNVKSYQTFIDIKKEPFKYLKGHIVNGKYYFPGCGYIDNLLKLYPSQDLTISSMEFKSPLILIDGINQCLQTNVFQTGKTEFKLYYHFKDNKSNEWVQSCIANFQLLNNNNSNNNNSNNNNNNKKLNLQEIISKKCNKTKISRIDLYQHIKSKTGLTYNDEFQGVIQCFLGDSCSLSEVTVNSSTSKSFFKTQLLDSCLHGMIALIQENCQLVFHKIEGLKYYSSNLQVYETNDINSSNNSIFVYSKFKSRLGNSYLASIIIMLKDGTILIEIERVICKSLKIVKNPLEIEYPIDLVYSRYLQPRDSPIGAPSSFKSLYESDQFKSKDIYSSNISIYQNFISSSLFLNINKRNSNITIKEIENQSIDQLFLNFKSIFINKNLENSIQYERLFKSVFKTIKMFGYKNNNNNNFKELKKQMENNNNYKILKRSTRVISKQLFPFENENDSNLDSPQILFEDGLLDKFYSDTEFVAKNHQLLAEIIKESIKPLVLKKEKITIRILEFGGGVSSLSMVVLNKITQLLEESNNVFNQIDIEYTWSDISTSFIPDAKLKLSKIINNNNNNNNNENNNDLDLDGGKFGIKIIYRSLDLEEPLIEKQNLKYSYYDYVIMSNVLHVVKDIRFSIDQIYKVLVPNGQLLFIEPPFNSIILDNVFGVFNQWWSFQDTDIRKDSCCMNQQSWFDLLTNHNFKYIIMSKELESVSFLIHCKKPSILEININNNNNNNNNNNNNNNNNNNNNNNNNNYEDNVIIFCNEIDKDNKNNNNHFIKMLESIYSFKIIIKISSIKEFIELEESNIITNKSIIYFIKPIEQLNFENFKLVTFEFIEINKRLLSSNNLKCKHVLITTNVNNGKNYLSASVIGAAKYFEEFSEQLQLFYIDFDQQSIENLNLISKIDSLIDETINTQKEFIIMNNEIYYERYKKESIKNLINTFKSNSFEYGIGVSNDSFSNVYLKLTSNLEYKLKSRKEIIKSNKVEVNVLSLGVNYKDYLVYCGLVPPEICNRKGDINNPEIGIDFSGIITRVGKDCGEDQFKVGDEVYGIAFDSSSSHIIIDKDYIVKKPTNLSHSEAASIPAVYLTSLYSIFNIGNFNIQDNESILIHSGTGGVGLSALNILKWKGHKSHLFVTVGSKEKEQYLIDTYGDFITGIYSTRNKDYVKQIKLKLKQLGSNKKGVDLILNTLSSDYLDSNFKCLECGGRIVDLSITHLNPNEYIDFSKFKYNYGYHNVELLFINKRKLQILFLQISNAIENNQLNLIPINEYSNLKIKEAIEFINERKHIGKIIVNNNINLINKLIENNNFNSSSSSGSSSGSGSIDVKEPILKSNYKINNDNLGSTILVTGQTGIVLEILKWIVKFSDCVKDIIIFSKSPMKWELELLVNNNSNIRFHFKSIDICNESLVNESIDQILKDNPLINNVDSIFHFAFQQVSRKVNKIDMESLDISHGAKTFGAINLHNQSIKRNWKLKQFVMASSIASIIGSSKQCSYVCANNVLDSLSRFRKSIGLPSICTNYGSLGDAGFVSRFESVGEMLVGQGLNPISTNLILGSLDLQIQNQHLSTNLLICNFNFPAFKVNAQIPKQKFDFIINSIDGGGGGSNSSSGSGGGGKVVDSLNIKDIFINKISEFLSIESSKINQDLRLLDYGADSLLTVQLKNWIDKEISPNIITIQQIQNNTISLVIKIIITAIDNKKIKDSNQQSNNNENIKTGSFIGGKSKNNNVKNLKFWKKQIKLKVIGNEFSSSTSSYVNITKNGGTSKNNKRILFPFSSGGYLSTYLLFNLVKDSNCSIVYCLNTSIDLIIQSLKYHQLYFNLNQNEISKINIISVSSEKDYNQLFIKNNDINLIIIVSSDSFQDSILFEQEFNETELNLVKELIKSLIINGYCNNNDNNNNNNNNKISIINISSIYIYLGISNEFINENEYNSIEIPNFESIEKLPLSSGKIQSSLLIEHFLKDCSIKFNIPSTMIRIPPIFSNIETGLGNENELLQLFLQSCHSIGFYPNVSTSYPTIPINHLSNLIINQINNQNYYEHDNEKGKLLFNTINLNNNNSNNNNINSQQINQILKCEFNCKQIEFNDWIQILTDSNNSSCVYKYLQLHNIITKYSNSNTDTIQENNLEIINQMIINHLKQKK</sequence>
<organism>
    <name type="scientific">Dictyostelium discoideum</name>
    <name type="common">Social amoeba</name>
    <dbReference type="NCBI Taxonomy" id="44689"/>
    <lineage>
        <taxon>Eukaryota</taxon>
        <taxon>Amoebozoa</taxon>
        <taxon>Evosea</taxon>
        <taxon>Eumycetozoa</taxon>
        <taxon>Dictyostelia</taxon>
        <taxon>Dictyosteliales</taxon>
        <taxon>Dictyosteliaceae</taxon>
        <taxon>Dictyostelium</taxon>
    </lineage>
</organism>
<dbReference type="EC" id="2.3.1.-"/>
<dbReference type="EMBL" id="AAFI02000008">
    <property type="protein sequence ID" value="EAL71141.2"/>
    <property type="molecule type" value="Genomic_DNA"/>
</dbReference>
<dbReference type="RefSeq" id="XP_644952.2">
    <property type="nucleotide sequence ID" value="XM_639860.2"/>
</dbReference>
<dbReference type="SMR" id="Q558W4"/>
<dbReference type="FunCoup" id="Q558W4">
    <property type="interactions" value="4"/>
</dbReference>
<dbReference type="STRING" id="44689.Q558W4"/>
<dbReference type="GlyGen" id="Q558W4">
    <property type="glycosylation" value="1 site"/>
</dbReference>
<dbReference type="PaxDb" id="44689-DDB0235179"/>
<dbReference type="EnsemblProtists" id="EAL71141">
    <property type="protein sequence ID" value="EAL71141"/>
    <property type="gene ID" value="DDB_G0273007"/>
</dbReference>
<dbReference type="GeneID" id="8618630"/>
<dbReference type="KEGG" id="ddi:DDB_G0273007"/>
<dbReference type="dictyBase" id="DDB_G0273007">
    <property type="gene designation" value="pks15"/>
</dbReference>
<dbReference type="VEuPathDB" id="AmoebaDB:DDB_G0273007"/>
<dbReference type="eggNOG" id="KOG1202">
    <property type="taxonomic scope" value="Eukaryota"/>
</dbReference>
<dbReference type="HOGENOM" id="CLU_000022_31_5_1"/>
<dbReference type="InParanoid" id="Q558W4"/>
<dbReference type="OMA" id="FFATMLR"/>
<dbReference type="PhylomeDB" id="Q558W4"/>
<dbReference type="PRO" id="PR:Q558W4"/>
<dbReference type="Proteomes" id="UP000002195">
    <property type="component" value="Chromosome 2"/>
</dbReference>
<dbReference type="GO" id="GO:0016746">
    <property type="term" value="F:acyltransferase activity"/>
    <property type="evidence" value="ECO:0007669"/>
    <property type="project" value="InterPro"/>
</dbReference>
<dbReference type="GO" id="GO:0016491">
    <property type="term" value="F:oxidoreductase activity"/>
    <property type="evidence" value="ECO:0007669"/>
    <property type="project" value="InterPro"/>
</dbReference>
<dbReference type="GO" id="GO:0006633">
    <property type="term" value="P:fatty acid biosynthetic process"/>
    <property type="evidence" value="ECO:0000318"/>
    <property type="project" value="GO_Central"/>
</dbReference>
<dbReference type="CDD" id="cd05195">
    <property type="entry name" value="enoyl_red"/>
    <property type="match status" value="1"/>
</dbReference>
<dbReference type="CDD" id="cd08954">
    <property type="entry name" value="KR_1_FAS_SDR_x"/>
    <property type="match status" value="1"/>
</dbReference>
<dbReference type="CDD" id="cd00833">
    <property type="entry name" value="PKS"/>
    <property type="match status" value="1"/>
</dbReference>
<dbReference type="Gene3D" id="3.30.70.3290">
    <property type="match status" value="1"/>
</dbReference>
<dbReference type="Gene3D" id="3.40.47.10">
    <property type="match status" value="1"/>
</dbReference>
<dbReference type="Gene3D" id="3.40.366.10">
    <property type="entry name" value="Malonyl-Coenzyme A Acyl Carrier Protein, domain 2"/>
    <property type="match status" value="1"/>
</dbReference>
<dbReference type="Gene3D" id="3.90.180.10">
    <property type="entry name" value="Medium-chain alcohol dehydrogenases, catalytic domain"/>
    <property type="match status" value="1"/>
</dbReference>
<dbReference type="Gene3D" id="3.40.50.720">
    <property type="entry name" value="NAD(P)-binding Rossmann-like Domain"/>
    <property type="match status" value="3"/>
</dbReference>
<dbReference type="Gene3D" id="3.10.129.110">
    <property type="entry name" value="Polyketide synthase dehydratase"/>
    <property type="match status" value="1"/>
</dbReference>
<dbReference type="Gene3D" id="3.40.50.150">
    <property type="entry name" value="Vaccinia Virus protein VP39"/>
    <property type="match status" value="1"/>
</dbReference>
<dbReference type="InterPro" id="IPR001227">
    <property type="entry name" value="Ac_transferase_dom_sf"/>
</dbReference>
<dbReference type="InterPro" id="IPR036736">
    <property type="entry name" value="ACP-like_sf"/>
</dbReference>
<dbReference type="InterPro" id="IPR014043">
    <property type="entry name" value="Acyl_transferase_dom"/>
</dbReference>
<dbReference type="InterPro" id="IPR016035">
    <property type="entry name" value="Acyl_Trfase/lysoPLipase"/>
</dbReference>
<dbReference type="InterPro" id="IPR011032">
    <property type="entry name" value="GroES-like_sf"/>
</dbReference>
<dbReference type="InterPro" id="IPR014031">
    <property type="entry name" value="Ketoacyl_synth_C"/>
</dbReference>
<dbReference type="InterPro" id="IPR014030">
    <property type="entry name" value="Ketoacyl_synth_N"/>
</dbReference>
<dbReference type="InterPro" id="IPR016036">
    <property type="entry name" value="Malonyl_transacylase_ACP-bd"/>
</dbReference>
<dbReference type="InterPro" id="IPR013217">
    <property type="entry name" value="Methyltransf_12"/>
</dbReference>
<dbReference type="InterPro" id="IPR036291">
    <property type="entry name" value="NAD(P)-bd_dom_sf"/>
</dbReference>
<dbReference type="InterPro" id="IPR032821">
    <property type="entry name" value="PKS_assoc"/>
</dbReference>
<dbReference type="InterPro" id="IPR020841">
    <property type="entry name" value="PKS_Beta-ketoAc_synthase_dom"/>
</dbReference>
<dbReference type="InterPro" id="IPR042104">
    <property type="entry name" value="PKS_dehydratase_sf"/>
</dbReference>
<dbReference type="InterPro" id="IPR020843">
    <property type="entry name" value="PKS_ER"/>
</dbReference>
<dbReference type="InterPro" id="IPR013968">
    <property type="entry name" value="PKS_KR"/>
</dbReference>
<dbReference type="InterPro" id="IPR049900">
    <property type="entry name" value="PKS_mFAS_DH"/>
</dbReference>
<dbReference type="InterPro" id="IPR050444">
    <property type="entry name" value="Polyketide_Synthase"/>
</dbReference>
<dbReference type="InterPro" id="IPR009081">
    <property type="entry name" value="PP-bd_ACP"/>
</dbReference>
<dbReference type="InterPro" id="IPR029063">
    <property type="entry name" value="SAM-dependent_MTases_sf"/>
</dbReference>
<dbReference type="InterPro" id="IPR016039">
    <property type="entry name" value="Thiolase-like"/>
</dbReference>
<dbReference type="PANTHER" id="PTHR45681:SF4">
    <property type="entry name" value="BETA-KETOACYL SYNTHASE FAMILY PROTEIN-RELATED"/>
    <property type="match status" value="1"/>
</dbReference>
<dbReference type="PANTHER" id="PTHR45681">
    <property type="entry name" value="POLYKETIDE SYNTHASE 44-RELATED"/>
    <property type="match status" value="1"/>
</dbReference>
<dbReference type="Pfam" id="PF23297">
    <property type="entry name" value="ACP_SdgA_C"/>
    <property type="match status" value="1"/>
</dbReference>
<dbReference type="Pfam" id="PF00698">
    <property type="entry name" value="Acyl_transf_1"/>
    <property type="match status" value="1"/>
</dbReference>
<dbReference type="Pfam" id="PF13602">
    <property type="entry name" value="ADH_zinc_N_2"/>
    <property type="match status" value="1"/>
</dbReference>
<dbReference type="Pfam" id="PF16197">
    <property type="entry name" value="KAsynt_C_assoc"/>
    <property type="match status" value="1"/>
</dbReference>
<dbReference type="Pfam" id="PF00109">
    <property type="entry name" value="ketoacyl-synt"/>
    <property type="match status" value="1"/>
</dbReference>
<dbReference type="Pfam" id="PF02801">
    <property type="entry name" value="Ketoacyl-synt_C"/>
    <property type="match status" value="1"/>
</dbReference>
<dbReference type="Pfam" id="PF08659">
    <property type="entry name" value="KR"/>
    <property type="match status" value="1"/>
</dbReference>
<dbReference type="Pfam" id="PF08242">
    <property type="entry name" value="Methyltransf_12"/>
    <property type="match status" value="1"/>
</dbReference>
<dbReference type="SMART" id="SM00827">
    <property type="entry name" value="PKS_AT"/>
    <property type="match status" value="1"/>
</dbReference>
<dbReference type="SMART" id="SM00829">
    <property type="entry name" value="PKS_ER"/>
    <property type="match status" value="1"/>
</dbReference>
<dbReference type="SMART" id="SM00822">
    <property type="entry name" value="PKS_KR"/>
    <property type="match status" value="1"/>
</dbReference>
<dbReference type="SMART" id="SM00825">
    <property type="entry name" value="PKS_KS"/>
    <property type="match status" value="1"/>
</dbReference>
<dbReference type="SUPFAM" id="SSF47336">
    <property type="entry name" value="ACP-like"/>
    <property type="match status" value="1"/>
</dbReference>
<dbReference type="SUPFAM" id="SSF52151">
    <property type="entry name" value="FabD/lysophospholipase-like"/>
    <property type="match status" value="1"/>
</dbReference>
<dbReference type="SUPFAM" id="SSF50129">
    <property type="entry name" value="GroES-like"/>
    <property type="match status" value="1"/>
</dbReference>
<dbReference type="SUPFAM" id="SSF51735">
    <property type="entry name" value="NAD(P)-binding Rossmann-fold domains"/>
    <property type="match status" value="3"/>
</dbReference>
<dbReference type="SUPFAM" id="SSF55048">
    <property type="entry name" value="Probable ACP-binding domain of malonyl-CoA ACP transacylase"/>
    <property type="match status" value="1"/>
</dbReference>
<dbReference type="SUPFAM" id="SSF53335">
    <property type="entry name" value="S-adenosyl-L-methionine-dependent methyltransferases"/>
    <property type="match status" value="1"/>
</dbReference>
<dbReference type="SUPFAM" id="SSF53901">
    <property type="entry name" value="Thiolase-like"/>
    <property type="match status" value="1"/>
</dbReference>
<dbReference type="PROSITE" id="PS50075">
    <property type="entry name" value="CARRIER"/>
    <property type="match status" value="1"/>
</dbReference>
<dbReference type="PROSITE" id="PS52004">
    <property type="entry name" value="KS3_2"/>
    <property type="match status" value="1"/>
</dbReference>
<dbReference type="PROSITE" id="PS52019">
    <property type="entry name" value="PKS_MFAS_DH"/>
    <property type="match status" value="1"/>
</dbReference>
<protein>
    <recommendedName>
        <fullName>Probable polyketide synthase 15</fullName>
        <shortName>dipks15</shortName>
        <ecNumber>2.3.1.-</ecNumber>
    </recommendedName>
</protein>
<keyword id="KW-0175">Coiled coil</keyword>
<keyword id="KW-0596">Phosphopantetheine</keyword>
<keyword id="KW-0597">Phosphoprotein</keyword>
<keyword id="KW-1185">Reference proteome</keyword>
<keyword id="KW-0808">Transferase</keyword>
<reference key="1">
    <citation type="journal article" date="2002" name="Nature">
        <title>Sequence and analysis of chromosome 2 of Dictyostelium discoideum.</title>
        <authorList>
            <person name="Gloeckner G."/>
            <person name="Eichinger L."/>
            <person name="Szafranski K."/>
            <person name="Pachebat J.A."/>
            <person name="Bankier A.T."/>
            <person name="Dear P.H."/>
            <person name="Lehmann R."/>
            <person name="Baumgart C."/>
            <person name="Parra G."/>
            <person name="Abril J.F."/>
            <person name="Guigo R."/>
            <person name="Kumpf K."/>
            <person name="Tunggal B."/>
            <person name="Cox E.C."/>
            <person name="Quail M.A."/>
            <person name="Platzer M."/>
            <person name="Rosenthal A."/>
            <person name="Noegel A.A."/>
        </authorList>
    </citation>
    <scope>NUCLEOTIDE SEQUENCE [LARGE SCALE GENOMIC DNA]</scope>
    <source>
        <strain>AX4</strain>
    </source>
</reference>
<reference key="2">
    <citation type="journal article" date="2005" name="Nature">
        <title>The genome of the social amoeba Dictyostelium discoideum.</title>
        <authorList>
            <person name="Eichinger L."/>
            <person name="Pachebat J.A."/>
            <person name="Gloeckner G."/>
            <person name="Rajandream M.A."/>
            <person name="Sucgang R."/>
            <person name="Berriman M."/>
            <person name="Song J."/>
            <person name="Olsen R."/>
            <person name="Szafranski K."/>
            <person name="Xu Q."/>
            <person name="Tunggal B."/>
            <person name="Kummerfeld S."/>
            <person name="Madera M."/>
            <person name="Konfortov B.A."/>
            <person name="Rivero F."/>
            <person name="Bankier A.T."/>
            <person name="Lehmann R."/>
            <person name="Hamlin N."/>
            <person name="Davies R."/>
            <person name="Gaudet P."/>
            <person name="Fey P."/>
            <person name="Pilcher K."/>
            <person name="Chen G."/>
            <person name="Saunders D."/>
            <person name="Sodergren E.J."/>
            <person name="Davis P."/>
            <person name="Kerhornou A."/>
            <person name="Nie X."/>
            <person name="Hall N."/>
            <person name="Anjard C."/>
            <person name="Hemphill L."/>
            <person name="Bason N."/>
            <person name="Farbrother P."/>
            <person name="Desany B."/>
            <person name="Just E."/>
            <person name="Morio T."/>
            <person name="Rost R."/>
            <person name="Churcher C.M."/>
            <person name="Cooper J."/>
            <person name="Haydock S."/>
            <person name="van Driessche N."/>
            <person name="Cronin A."/>
            <person name="Goodhead I."/>
            <person name="Muzny D.M."/>
            <person name="Mourier T."/>
            <person name="Pain A."/>
            <person name="Lu M."/>
            <person name="Harper D."/>
            <person name="Lindsay R."/>
            <person name="Hauser H."/>
            <person name="James K.D."/>
            <person name="Quiles M."/>
            <person name="Madan Babu M."/>
            <person name="Saito T."/>
            <person name="Buchrieser C."/>
            <person name="Wardroper A."/>
            <person name="Felder M."/>
            <person name="Thangavelu M."/>
            <person name="Johnson D."/>
            <person name="Knights A."/>
            <person name="Loulseged H."/>
            <person name="Mungall K.L."/>
            <person name="Oliver K."/>
            <person name="Price C."/>
            <person name="Quail M.A."/>
            <person name="Urushihara H."/>
            <person name="Hernandez J."/>
            <person name="Rabbinowitsch E."/>
            <person name="Steffen D."/>
            <person name="Sanders M."/>
            <person name="Ma J."/>
            <person name="Kohara Y."/>
            <person name="Sharp S."/>
            <person name="Simmonds M.N."/>
            <person name="Spiegler S."/>
            <person name="Tivey A."/>
            <person name="Sugano S."/>
            <person name="White B."/>
            <person name="Walker D."/>
            <person name="Woodward J.R."/>
            <person name="Winckler T."/>
            <person name="Tanaka Y."/>
            <person name="Shaulsky G."/>
            <person name="Schleicher M."/>
            <person name="Weinstock G.M."/>
            <person name="Rosenthal A."/>
            <person name="Cox E.C."/>
            <person name="Chisholm R.L."/>
            <person name="Gibbs R.A."/>
            <person name="Loomis W.F."/>
            <person name="Platzer M."/>
            <person name="Kay R.R."/>
            <person name="Williams J.G."/>
            <person name="Dear P.H."/>
            <person name="Noegel A.A."/>
            <person name="Barrell B.G."/>
            <person name="Kuspa A."/>
        </authorList>
    </citation>
    <scope>NUCLEOTIDE SEQUENCE [LARGE SCALE GENOMIC DNA]</scope>
    <source>
        <strain>AX4</strain>
    </source>
</reference>
<reference key="3">
    <citation type="journal article" date="2007" name="Bioinformatics">
        <title>Polyketide synthase genes and the natural products potential of Dictyostelium discoideum.</title>
        <authorList>
            <person name="Zucko J."/>
            <person name="Skunca N."/>
            <person name="Curk T."/>
            <person name="Zupan B."/>
            <person name="Long P.F."/>
            <person name="Cullum J."/>
            <person name="Kessin R.H."/>
            <person name="Hranueli D."/>
        </authorList>
    </citation>
    <scope>IDENTIFICATION</scope>
</reference>
<name>PKS15_DICDI</name>